<proteinExistence type="evidence at protein level"/>
<reference key="1">
    <citation type="submission" date="2003-09" db="EMBL/GenBank/DDBJ databases">
        <authorList>
            <person name="Satake H."/>
            <person name="Villegas E."/>
            <person name="Corzo G."/>
        </authorList>
    </citation>
    <scope>NUCLEOTIDE SEQUENCE [MRNA]</scope>
    <source>
        <tissue>Venom gland</tissue>
    </source>
</reference>
<reference key="2">
    <citation type="journal article" date="2003" name="FEBS Lett.">
        <title>Distinct primary structures of the major peptide toxins from the venom of the spider Macrothele gigas that bind to sites 3 and 4 in the sodium channel.</title>
        <authorList>
            <person name="Corzo G."/>
            <person name="Gilles N."/>
            <person name="Satake H."/>
            <person name="Villegas E."/>
            <person name="Dai L."/>
            <person name="Nakajima T."/>
            <person name="Haupt J."/>
        </authorList>
    </citation>
    <scope>PROTEIN SEQUENCE OF 51-79</scope>
    <scope>FUNCTION</scope>
    <scope>SUBCELLULAR LOCATION</scope>
    <scope>TOXIC DOSE</scope>
    <scope>MASS SPECTROMETRY</scope>
    <source>
        <tissue>Venom</tissue>
    </source>
</reference>
<reference key="3">
    <citation type="journal article" date="2007" name="J. Biol. Chem.">
        <title>Solution structure and alanine scan of a spider toxin that affects the activation of mammalian voltage-gated sodium channels.</title>
        <authorList>
            <person name="Corzo G."/>
            <person name="Sabo J.K."/>
            <person name="Bosmans F."/>
            <person name="Billen B."/>
            <person name="Villegas E."/>
            <person name="Tytgat J."/>
            <person name="Norton R.S."/>
        </authorList>
    </citation>
    <scope>STRUCTURE BY NMR OF 51-79</scope>
    <scope>DISULFIDE BONDS</scope>
    <scope>SYNTHESIS</scope>
    <scope>ALANINE-SCANNING MUTAGENESIS</scope>
</reference>
<feature type="signal peptide" evidence="1">
    <location>
        <begin position="1"/>
        <end position="20"/>
    </location>
</feature>
<feature type="propeptide" id="PRO_0000035588" evidence="2 3">
    <location>
        <begin position="21"/>
        <end position="50"/>
    </location>
</feature>
<feature type="peptide" id="PRO_0000035589" description="Beta-hexatoxin-Mg1a" evidence="2">
    <location>
        <begin position="51"/>
        <end position="79"/>
    </location>
</feature>
<feature type="disulfide bond" evidence="3">
    <location>
        <begin position="52"/>
        <end position="66"/>
    </location>
</feature>
<feature type="disulfide bond" evidence="3">
    <location>
        <begin position="59"/>
        <end position="71"/>
    </location>
</feature>
<feature type="disulfide bond" evidence="3">
    <location>
        <begin position="65"/>
        <end position="76"/>
    </location>
</feature>
<feature type="mutagenesis site" description="Decrease in activity." evidence="3">
    <original>T</original>
    <variation>A</variation>
    <location>
        <position position="55"/>
    </location>
</feature>
<feature type="mutagenesis site" description="Decrease in activity." evidence="3">
    <original>F</original>
    <variation>A</variation>
    <location>
        <position position="56"/>
    </location>
</feature>
<feature type="mutagenesis site" description="Loss of activity on Nav1.2." evidence="3">
    <original>F</original>
    <variation>Y</variation>
    <location>
        <position position="56"/>
    </location>
</feature>
<feature type="mutagenesis site" description="Decrease in activity." evidence="3">
    <original>W</original>
    <variation>A</variation>
    <variation>Y</variation>
    <location>
        <position position="57"/>
    </location>
</feature>
<feature type="mutagenesis site" description="No change in activity." evidence="3">
    <original>K</original>
    <variation>A</variation>
    <location>
        <position position="58"/>
    </location>
</feature>
<feature type="mutagenesis site" description="Loss of activity on Nav1.2." evidence="3">
    <original>K</original>
    <variation>A</variation>
    <location>
        <position position="60"/>
    </location>
</feature>
<feature type="mutagenesis site" description="No change in activity." evidence="3">
    <original>N</original>
    <variation>A</variation>
    <location>
        <position position="61"/>
    </location>
</feature>
<feature type="mutagenesis site" description="Decrease in activity." evidence="3">
    <original>K</original>
    <variation>A</variation>
    <location>
        <position position="62"/>
    </location>
</feature>
<feature type="mutagenesis site" description="No change in activity." evidence="3">
    <original>K</original>
    <variation>A</variation>
    <location>
        <position position="63"/>
    </location>
</feature>
<feature type="mutagenesis site" description="Loss of activity on Nav1.2." evidence="3">
    <original>E</original>
    <variation>A</variation>
    <location>
        <position position="64"/>
    </location>
</feature>
<feature type="mutagenesis site" description="Loss of activity on Nav1.2." evidence="3">
    <original>W</original>
    <variation>A</variation>
    <variation>F</variation>
    <location>
        <position position="68"/>
    </location>
</feature>
<feature type="mutagenesis site" description="Decrease in activity." evidence="3">
    <original>W</original>
    <variation>Y</variation>
    <location>
        <position position="68"/>
    </location>
</feature>
<feature type="mutagenesis site" description="Loss of activity on Nav1.2." evidence="3">
    <original>N</original>
    <variation>A</variation>
    <location>
        <position position="69"/>
    </location>
</feature>
<feature type="mutagenesis site" description="Decrease in activity." evidence="3">
    <original>L</original>
    <variation>A</variation>
    <location>
        <position position="73"/>
    </location>
</feature>
<feature type="mutagenesis site" description="Loss of activity on Nav1.2." evidence="3">
    <original>I</original>
    <variation>A</variation>
    <location>
        <position position="75"/>
    </location>
</feature>
<feature type="mutagenesis site" description="Loss of activity on Nav1.2." evidence="3">
    <original>M</original>
    <variation>A</variation>
    <location>
        <position position="77"/>
    </location>
</feature>
<feature type="mutagenesis site" description="Loss of activity on Nav1.2." evidence="3">
    <original>P</original>
    <variation>A</variation>
    <location>
        <position position="78"/>
    </location>
</feature>
<feature type="mutagenesis site" description="Important increase in activity." evidence="3">
    <original>R</original>
    <variation>A</variation>
    <location>
        <position position="79"/>
    </location>
</feature>
<feature type="strand" evidence="6">
    <location>
        <begin position="55"/>
        <end position="57"/>
    </location>
</feature>
<feature type="strand" evidence="6">
    <location>
        <begin position="64"/>
        <end position="67"/>
    </location>
</feature>
<feature type="strand" evidence="6">
    <location>
        <begin position="73"/>
        <end position="76"/>
    </location>
</feature>
<dbReference type="EMBL" id="AB121201">
    <property type="protein sequence ID" value="BAD13408.1"/>
    <property type="molecule type" value="mRNA"/>
</dbReference>
<dbReference type="PDB" id="2GX1">
    <property type="method" value="NMR"/>
    <property type="chains" value="A=51-79"/>
</dbReference>
<dbReference type="PDBsum" id="2GX1"/>
<dbReference type="SMR" id="P83561"/>
<dbReference type="ArachnoServer" id="AS000384">
    <property type="toxin name" value="beta-hexatoxin-Mg1a"/>
</dbReference>
<dbReference type="EvolutionaryTrace" id="P83561"/>
<dbReference type="GO" id="GO:0005576">
    <property type="term" value="C:extracellular region"/>
    <property type="evidence" value="ECO:0007669"/>
    <property type="project" value="UniProtKB-SubCell"/>
</dbReference>
<dbReference type="GO" id="GO:0019871">
    <property type="term" value="F:sodium channel inhibitor activity"/>
    <property type="evidence" value="ECO:0007669"/>
    <property type="project" value="InterPro"/>
</dbReference>
<dbReference type="GO" id="GO:0090729">
    <property type="term" value="F:toxin activity"/>
    <property type="evidence" value="ECO:0007669"/>
    <property type="project" value="UniProtKB-KW"/>
</dbReference>
<dbReference type="InterPro" id="IPR012628">
    <property type="entry name" value="Toxin_23"/>
</dbReference>
<dbReference type="Pfam" id="PF08093">
    <property type="entry name" value="Toxin_23"/>
    <property type="match status" value="1"/>
</dbReference>
<organism>
    <name type="scientific">Macrothele gigas</name>
    <name type="common">Japanese funnel web spider</name>
    <dbReference type="NCBI Taxonomy" id="223896"/>
    <lineage>
        <taxon>Eukaryota</taxon>
        <taxon>Metazoa</taxon>
        <taxon>Ecdysozoa</taxon>
        <taxon>Arthropoda</taxon>
        <taxon>Chelicerata</taxon>
        <taxon>Arachnida</taxon>
        <taxon>Araneae</taxon>
        <taxon>Mygalomorphae</taxon>
        <taxon>Macrothelidae</taxon>
        <taxon>Macrothele</taxon>
    </lineage>
</organism>
<comment type="function">
    <text evidence="2">Insect and vertebrate active toxin. Binds to site 4 of mammalian voltage-gated sodium channels and shifts the activation voltage of the mammalian Nav1.2a/SCN2A channel to more hyperpolarized voltages, whereas the insect channel, DmNav1 (para), is not affected. Competes for binding at site 3 of the insect sodium channel. Causes temporary paralysis when injected into lepidopteran larvae at 8.6 nmol/g. A low intracranial injection dose into mice causes lacrimation, closure of the eyes and sweating. A high injection dose causes extensive lacrimation and death.</text>
</comment>
<comment type="subcellular location">
    <subcellularLocation>
        <location evidence="2">Secreted</location>
    </subcellularLocation>
</comment>
<comment type="tissue specificity">
    <text evidence="5">Expressed by the venom gland.</text>
</comment>
<comment type="domain">
    <text evidence="1">The presence of a 'disulfide through disulfide knot' structurally defines this protein as a knottin.</text>
</comment>
<comment type="mass spectrometry" mass="3286.8" method="MALDI" evidence="2"/>
<comment type="toxic dose">
    <text evidence="2">LD(50) is 0.73 pmol/g by intracranial injection into mice.</text>
</comment>
<comment type="miscellaneous">
    <text>The primary structure of the mature toxin is identical to that of beta-hexatoxin-Mr1a (Raventoxin-III) from Macrothele raveni (AC P61232).</text>
</comment>
<comment type="similarity">
    <text evidence="4">Belongs to the neurotoxin 15 family. 01 (magi-5) subfamily.</text>
</comment>
<sequence length="79" mass="8791">MKAPATTLILVMSLISVLWATPDLEEGDLLAELGDLIATDDEYPMKPEERGCKLTFWKCKNKKECCGWNACALGICMPR</sequence>
<name>TXMG5_MACGS</name>
<keyword id="KW-0002">3D-structure</keyword>
<keyword id="KW-0903">Direct protein sequencing</keyword>
<keyword id="KW-1015">Disulfide bond</keyword>
<keyword id="KW-0872">Ion channel impairing toxin</keyword>
<keyword id="KW-0960">Knottin</keyword>
<keyword id="KW-0528">Neurotoxin</keyword>
<keyword id="KW-0964">Secreted</keyword>
<keyword id="KW-0732">Signal</keyword>
<keyword id="KW-0800">Toxin</keyword>
<keyword id="KW-0738">Voltage-gated sodium channel impairing toxin</keyword>
<evidence type="ECO:0000255" key="1"/>
<evidence type="ECO:0000269" key="2">
    <source>
    </source>
</evidence>
<evidence type="ECO:0000269" key="3">
    <source>
    </source>
</evidence>
<evidence type="ECO:0000305" key="4"/>
<evidence type="ECO:0000305" key="5">
    <source>
    </source>
</evidence>
<evidence type="ECO:0007829" key="6">
    <source>
        <dbReference type="PDB" id="2GX1"/>
    </source>
</evidence>
<protein>
    <recommendedName>
        <fullName>Beta-hexatoxin-Mg1a</fullName>
        <shortName>Beta-HXTX-Mg1a</shortName>
    </recommendedName>
    <alternativeName>
        <fullName>Neurotoxin magi-5</fullName>
    </alternativeName>
</protein>
<accession>P83561</accession>
<accession>Q75WH0</accession>